<proteinExistence type="inferred from homology"/>
<keyword id="KW-0066">ATP synthesis</keyword>
<keyword id="KW-1003">Cell membrane</keyword>
<keyword id="KW-0375">Hydrogen ion transport</keyword>
<keyword id="KW-0406">Ion transport</keyword>
<keyword id="KW-0472">Membrane</keyword>
<keyword id="KW-0813">Transport</keyword>
<feature type="chain" id="PRO_1000059409" description="A-type ATP synthase subunit E">
    <location>
        <begin position="1"/>
        <end position="203"/>
    </location>
</feature>
<dbReference type="EMBL" id="CP000743">
    <property type="protein sequence ID" value="ABR55654.1"/>
    <property type="molecule type" value="Genomic_DNA"/>
</dbReference>
<dbReference type="RefSeq" id="WP_011972786.1">
    <property type="nucleotide sequence ID" value="NC_009635.1"/>
</dbReference>
<dbReference type="SMR" id="A6UT32"/>
<dbReference type="STRING" id="419665.Maeo_0062"/>
<dbReference type="GeneID" id="5327274"/>
<dbReference type="KEGG" id="mae:Maeo_0062"/>
<dbReference type="eggNOG" id="arCOG00869">
    <property type="taxonomic scope" value="Archaea"/>
</dbReference>
<dbReference type="HOGENOM" id="CLU_105846_1_0_2"/>
<dbReference type="OrthoDB" id="4691at2157"/>
<dbReference type="Proteomes" id="UP000001106">
    <property type="component" value="Chromosome"/>
</dbReference>
<dbReference type="GO" id="GO:0005886">
    <property type="term" value="C:plasma membrane"/>
    <property type="evidence" value="ECO:0007669"/>
    <property type="project" value="UniProtKB-SubCell"/>
</dbReference>
<dbReference type="GO" id="GO:0033178">
    <property type="term" value="C:proton-transporting two-sector ATPase complex, catalytic domain"/>
    <property type="evidence" value="ECO:0007669"/>
    <property type="project" value="InterPro"/>
</dbReference>
<dbReference type="GO" id="GO:0005524">
    <property type="term" value="F:ATP binding"/>
    <property type="evidence" value="ECO:0007669"/>
    <property type="project" value="UniProtKB-UniRule"/>
</dbReference>
<dbReference type="GO" id="GO:0046933">
    <property type="term" value="F:proton-transporting ATP synthase activity, rotational mechanism"/>
    <property type="evidence" value="ECO:0007669"/>
    <property type="project" value="UniProtKB-UniRule"/>
</dbReference>
<dbReference type="GO" id="GO:0046961">
    <property type="term" value="F:proton-transporting ATPase activity, rotational mechanism"/>
    <property type="evidence" value="ECO:0007669"/>
    <property type="project" value="InterPro"/>
</dbReference>
<dbReference type="GO" id="GO:0042777">
    <property type="term" value="P:proton motive force-driven plasma membrane ATP synthesis"/>
    <property type="evidence" value="ECO:0007669"/>
    <property type="project" value="UniProtKB-UniRule"/>
</dbReference>
<dbReference type="Gene3D" id="3.30.2320.30">
    <property type="entry name" value="ATP synthase, E subunit, C-terminal"/>
    <property type="match status" value="1"/>
</dbReference>
<dbReference type="Gene3D" id="1.20.5.620">
    <property type="entry name" value="F1F0 ATP synthase subunit B, membrane domain"/>
    <property type="match status" value="1"/>
</dbReference>
<dbReference type="HAMAP" id="MF_00311">
    <property type="entry name" value="ATP_synth_E_arch"/>
    <property type="match status" value="1"/>
</dbReference>
<dbReference type="InterPro" id="IPR028987">
    <property type="entry name" value="ATP_synth_B-like_membr_sf"/>
</dbReference>
<dbReference type="InterPro" id="IPR038495">
    <property type="entry name" value="ATPase_E_C"/>
</dbReference>
<dbReference type="InterPro" id="IPR002842">
    <property type="entry name" value="ATPase_V1_Esu"/>
</dbReference>
<dbReference type="PANTHER" id="PTHR45715">
    <property type="entry name" value="ATPASE H+-TRANSPORTING V1 SUBUNIT E1A-RELATED"/>
    <property type="match status" value="1"/>
</dbReference>
<dbReference type="Pfam" id="PF01991">
    <property type="entry name" value="vATP-synt_E"/>
    <property type="match status" value="1"/>
</dbReference>
<dbReference type="SUPFAM" id="SSF81573">
    <property type="entry name" value="F1F0 ATP synthase subunit B, membrane domain"/>
    <property type="match status" value="1"/>
</dbReference>
<dbReference type="SUPFAM" id="SSF160527">
    <property type="entry name" value="V-type ATPase subunit E-like"/>
    <property type="match status" value="1"/>
</dbReference>
<name>AATE_META3</name>
<organism>
    <name type="scientific">Methanococcus aeolicus (strain ATCC BAA-1280 / DSM 17508 / OCM 812 / Nankai-3)</name>
    <dbReference type="NCBI Taxonomy" id="419665"/>
    <lineage>
        <taxon>Archaea</taxon>
        <taxon>Methanobacteriati</taxon>
        <taxon>Methanobacteriota</taxon>
        <taxon>Methanomada group</taxon>
        <taxon>Methanococci</taxon>
        <taxon>Methanococcales</taxon>
        <taxon>Methanococcaceae</taxon>
        <taxon>Methanococcus</taxon>
    </lineage>
</organism>
<protein>
    <recommendedName>
        <fullName evidence="1">A-type ATP synthase subunit E</fullName>
    </recommendedName>
</protein>
<evidence type="ECO:0000255" key="1">
    <source>
        <dbReference type="HAMAP-Rule" id="MF_00311"/>
    </source>
</evidence>
<comment type="function">
    <text evidence="1">Component of the A-type ATP synthase that produces ATP from ADP in the presence of a proton gradient across the membrane.</text>
</comment>
<comment type="subunit">
    <text evidence="1">Has multiple subunits with at least A(3), B(3), C, D, E, F, H, I and proteolipid K(x).</text>
</comment>
<comment type="subcellular location">
    <subcellularLocation>
        <location evidence="1">Cell membrane</location>
        <topology evidence="1">Peripheral membrane protein</topology>
    </subcellularLocation>
</comment>
<comment type="similarity">
    <text evidence="1">Belongs to the V-ATPase E subunit family.</text>
</comment>
<sequence>MGADKITSKILDDANNTASKIKSEAQKEADLILEKAKIEAEEQTQDILKRGDKEAETTYNRILAEARLNSKKKMLKERENLINMAIEKLKEDLKELPKKDSYKDILLKLIIEGVMSLDGNELVVVLNEQDMELIEDSALWAIEKELESKVKKVIILKKGAPANIIGGCIIKTADGTKFCDNSLESVFERNMESIRANVASLLF</sequence>
<accession>A6UT32</accession>
<gene>
    <name evidence="1" type="primary">atpE</name>
    <name type="ordered locus">Maeo_0062</name>
</gene>
<reference key="1">
    <citation type="submission" date="2007-06" db="EMBL/GenBank/DDBJ databases">
        <title>Complete sequence of Methanococcus aeolicus Nankai-3.</title>
        <authorList>
            <consortium name="US DOE Joint Genome Institute"/>
            <person name="Copeland A."/>
            <person name="Lucas S."/>
            <person name="Lapidus A."/>
            <person name="Barry K."/>
            <person name="Glavina del Rio T."/>
            <person name="Dalin E."/>
            <person name="Tice H."/>
            <person name="Pitluck S."/>
            <person name="Chain P."/>
            <person name="Malfatti S."/>
            <person name="Shin M."/>
            <person name="Vergez L."/>
            <person name="Schmutz J."/>
            <person name="Larimer F."/>
            <person name="Land M."/>
            <person name="Hauser L."/>
            <person name="Kyrpides N."/>
            <person name="Lykidis A."/>
            <person name="Sieprawska-Lupa M."/>
            <person name="Whitman W.B."/>
            <person name="Richardson P."/>
        </authorList>
    </citation>
    <scope>NUCLEOTIDE SEQUENCE [LARGE SCALE GENOMIC DNA]</scope>
    <source>
        <strain>ATCC BAA-1280 / DSM 17508 / OCM 812 / Nankai-3</strain>
    </source>
</reference>